<organism>
    <name type="scientific">Bdellovibrio bacteriovorus (strain ATCC 15356 / DSM 50701 / NCIMB 9529 / HD100)</name>
    <dbReference type="NCBI Taxonomy" id="264462"/>
    <lineage>
        <taxon>Bacteria</taxon>
        <taxon>Pseudomonadati</taxon>
        <taxon>Bdellovibrionota</taxon>
        <taxon>Bdellovibrionia</taxon>
        <taxon>Bdellovibrionales</taxon>
        <taxon>Pseudobdellovibrionaceae</taxon>
        <taxon>Bdellovibrio</taxon>
    </lineage>
</organism>
<reference key="1">
    <citation type="journal article" date="2004" name="Science">
        <title>A predator unmasked: life cycle of Bdellovibrio bacteriovorus from a genomic perspective.</title>
        <authorList>
            <person name="Rendulic S."/>
            <person name="Jagtap P."/>
            <person name="Rosinus A."/>
            <person name="Eppinger M."/>
            <person name="Baar C."/>
            <person name="Lanz C."/>
            <person name="Keller H."/>
            <person name="Lambert C."/>
            <person name="Evans K.J."/>
            <person name="Goesmann A."/>
            <person name="Meyer F."/>
            <person name="Sockett R.E."/>
            <person name="Schuster S.C."/>
        </authorList>
    </citation>
    <scope>NUCLEOTIDE SEQUENCE [LARGE SCALE GENOMIC DNA]</scope>
    <source>
        <strain>ATCC 15356 / DSM 50701 / NCIMB 9529 / HD100</strain>
    </source>
</reference>
<keyword id="KW-1185">Reference proteome</keyword>
<keyword id="KW-0687">Ribonucleoprotein</keyword>
<keyword id="KW-0689">Ribosomal protein</keyword>
<keyword id="KW-0694">RNA-binding</keyword>
<keyword id="KW-0699">rRNA-binding</keyword>
<evidence type="ECO:0000255" key="1">
    <source>
        <dbReference type="HAMAP-Rule" id="MF_01325"/>
    </source>
</evidence>
<evidence type="ECO:0000256" key="2">
    <source>
        <dbReference type="SAM" id="MobiDB-lite"/>
    </source>
</evidence>
<evidence type="ECO:0000305" key="3"/>
<feature type="chain" id="PRO_0000241319" description="Large ribosomal subunit protein uL3">
    <location>
        <begin position="1"/>
        <end position="220"/>
    </location>
</feature>
<feature type="region of interest" description="Disordered" evidence="2">
    <location>
        <begin position="145"/>
        <end position="169"/>
    </location>
</feature>
<proteinExistence type="inferred from homology"/>
<name>RL3_BDEBA</name>
<gene>
    <name evidence="1" type="primary">rplC</name>
    <name type="ordered locus">Bd2976</name>
</gene>
<accession>Q6MJ15</accession>
<protein>
    <recommendedName>
        <fullName evidence="1">Large ribosomal subunit protein uL3</fullName>
    </recommendedName>
    <alternativeName>
        <fullName evidence="3">50S ribosomal protein L3</fullName>
    </alternativeName>
</protein>
<comment type="function">
    <text evidence="1">One of the primary rRNA binding proteins, it binds directly near the 3'-end of the 23S rRNA, where it nucleates assembly of the 50S subunit.</text>
</comment>
<comment type="subunit">
    <text evidence="1">Part of the 50S ribosomal subunit. Forms a cluster with proteins L14 and L19.</text>
</comment>
<comment type="similarity">
    <text evidence="1">Belongs to the universal ribosomal protein uL3 family.</text>
</comment>
<sequence length="220" mass="23648">MSETTETQNTAGLKLNGLFAFKEGMATIYNENGEAVPVTVLRYEPWFVSQIKTNEADGYEAIQVACHPKKAKNSNKAEKGHLEKAGFENGAQFVKELRQAAPEGTVVGAQISIDSLAKGDFVKITSKSKGKGFAGSVKRWGFAGGPASHGSKFHRRPGSSGNRTWPGRVMPGKKFPGHLGAETVTVKNVEVVQIIAEENVLMVKGPVPGARNTLVKLVRE</sequence>
<dbReference type="EMBL" id="BX842654">
    <property type="protein sequence ID" value="CAE80748.1"/>
    <property type="molecule type" value="Genomic_DNA"/>
</dbReference>
<dbReference type="RefSeq" id="WP_011165352.1">
    <property type="nucleotide sequence ID" value="NC_005363.1"/>
</dbReference>
<dbReference type="SMR" id="Q6MJ15"/>
<dbReference type="STRING" id="264462.Bd2976"/>
<dbReference type="GeneID" id="93013839"/>
<dbReference type="KEGG" id="bba:Bd2976"/>
<dbReference type="eggNOG" id="COG0087">
    <property type="taxonomic scope" value="Bacteria"/>
</dbReference>
<dbReference type="HOGENOM" id="CLU_044142_4_1_7"/>
<dbReference type="Proteomes" id="UP000008080">
    <property type="component" value="Chromosome"/>
</dbReference>
<dbReference type="GO" id="GO:0022625">
    <property type="term" value="C:cytosolic large ribosomal subunit"/>
    <property type="evidence" value="ECO:0007669"/>
    <property type="project" value="TreeGrafter"/>
</dbReference>
<dbReference type="GO" id="GO:0019843">
    <property type="term" value="F:rRNA binding"/>
    <property type="evidence" value="ECO:0007669"/>
    <property type="project" value="UniProtKB-UniRule"/>
</dbReference>
<dbReference type="GO" id="GO:0003735">
    <property type="term" value="F:structural constituent of ribosome"/>
    <property type="evidence" value="ECO:0007669"/>
    <property type="project" value="InterPro"/>
</dbReference>
<dbReference type="GO" id="GO:0006412">
    <property type="term" value="P:translation"/>
    <property type="evidence" value="ECO:0007669"/>
    <property type="project" value="UniProtKB-UniRule"/>
</dbReference>
<dbReference type="FunFam" id="2.40.30.10:FF:000004">
    <property type="entry name" value="50S ribosomal protein L3"/>
    <property type="match status" value="1"/>
</dbReference>
<dbReference type="Gene3D" id="3.30.160.810">
    <property type="match status" value="1"/>
</dbReference>
<dbReference type="Gene3D" id="2.40.30.10">
    <property type="entry name" value="Translation factors"/>
    <property type="match status" value="1"/>
</dbReference>
<dbReference type="HAMAP" id="MF_01325_B">
    <property type="entry name" value="Ribosomal_uL3_B"/>
    <property type="match status" value="1"/>
</dbReference>
<dbReference type="InterPro" id="IPR000597">
    <property type="entry name" value="Ribosomal_uL3"/>
</dbReference>
<dbReference type="InterPro" id="IPR019927">
    <property type="entry name" value="Ribosomal_uL3_bac/org-type"/>
</dbReference>
<dbReference type="InterPro" id="IPR009000">
    <property type="entry name" value="Transl_B-barrel_sf"/>
</dbReference>
<dbReference type="NCBIfam" id="TIGR03625">
    <property type="entry name" value="L3_bact"/>
    <property type="match status" value="1"/>
</dbReference>
<dbReference type="PANTHER" id="PTHR11229">
    <property type="entry name" value="50S RIBOSOMAL PROTEIN L3"/>
    <property type="match status" value="1"/>
</dbReference>
<dbReference type="PANTHER" id="PTHR11229:SF16">
    <property type="entry name" value="LARGE RIBOSOMAL SUBUNIT PROTEIN UL3C"/>
    <property type="match status" value="1"/>
</dbReference>
<dbReference type="Pfam" id="PF00297">
    <property type="entry name" value="Ribosomal_L3"/>
    <property type="match status" value="1"/>
</dbReference>
<dbReference type="SUPFAM" id="SSF50447">
    <property type="entry name" value="Translation proteins"/>
    <property type="match status" value="1"/>
</dbReference>